<reference key="1">
    <citation type="submission" date="2007-10" db="EMBL/GenBank/DDBJ databases">
        <title>Brucella canis ATCC 23365 whole genome shotgun sequencing project.</title>
        <authorList>
            <person name="Setubal J.C."/>
            <person name="Bowns C."/>
            <person name="Boyle S."/>
            <person name="Crasta O.R."/>
            <person name="Czar M.J."/>
            <person name="Dharmanolla C."/>
            <person name="Gillespie J.J."/>
            <person name="Kenyon R.W."/>
            <person name="Lu J."/>
            <person name="Mane S."/>
            <person name="Mohapatra S."/>
            <person name="Nagrani S."/>
            <person name="Purkayastha A."/>
            <person name="Rajasimha H.K."/>
            <person name="Shallom J.M."/>
            <person name="Shallom S."/>
            <person name="Shukla M."/>
            <person name="Snyder E.E."/>
            <person name="Sobral B.W."/>
            <person name="Wattam A.R."/>
            <person name="Will R."/>
            <person name="Williams K."/>
            <person name="Yoo H."/>
            <person name="Bruce D."/>
            <person name="Detter C."/>
            <person name="Munk C."/>
            <person name="Brettin T.S."/>
        </authorList>
    </citation>
    <scope>NUCLEOTIDE SEQUENCE [LARGE SCALE GENOMIC DNA]</scope>
    <source>
        <strain>ATCC 23365 / NCTC 10854 / RM-666</strain>
    </source>
</reference>
<gene>
    <name evidence="1" type="primary">mdh</name>
    <name type="ordered locus">BCAN_A1971</name>
</gene>
<evidence type="ECO:0000255" key="1">
    <source>
        <dbReference type="HAMAP-Rule" id="MF_00487"/>
    </source>
</evidence>
<accession>A9M8R3</accession>
<protein>
    <recommendedName>
        <fullName evidence="1">Malate dehydrogenase</fullName>
        <ecNumber evidence="1">1.1.1.37</ecNumber>
    </recommendedName>
</protein>
<name>MDH_BRUC2</name>
<proteinExistence type="inferred from homology"/>
<feature type="chain" id="PRO_1000081354" description="Malate dehydrogenase">
    <location>
        <begin position="1"/>
        <end position="320"/>
    </location>
</feature>
<feature type="active site" description="Proton acceptor" evidence="1">
    <location>
        <position position="176"/>
    </location>
</feature>
<feature type="binding site" evidence="1">
    <location>
        <begin position="10"/>
        <end position="15"/>
    </location>
    <ligand>
        <name>NAD(+)</name>
        <dbReference type="ChEBI" id="CHEBI:57540"/>
    </ligand>
</feature>
<feature type="binding site" evidence="1">
    <location>
        <position position="34"/>
    </location>
    <ligand>
        <name>NAD(+)</name>
        <dbReference type="ChEBI" id="CHEBI:57540"/>
    </ligand>
</feature>
<feature type="binding site" evidence="1">
    <location>
        <position position="83"/>
    </location>
    <ligand>
        <name>substrate</name>
    </ligand>
</feature>
<feature type="binding site" evidence="1">
    <location>
        <position position="89"/>
    </location>
    <ligand>
        <name>substrate</name>
    </ligand>
</feature>
<feature type="binding site" evidence="1">
    <location>
        <position position="96"/>
    </location>
    <ligand>
        <name>NAD(+)</name>
        <dbReference type="ChEBI" id="CHEBI:57540"/>
    </ligand>
</feature>
<feature type="binding site" evidence="1">
    <location>
        <begin position="119"/>
        <end position="121"/>
    </location>
    <ligand>
        <name>NAD(+)</name>
        <dbReference type="ChEBI" id="CHEBI:57540"/>
    </ligand>
</feature>
<feature type="binding site" evidence="1">
    <location>
        <position position="121"/>
    </location>
    <ligand>
        <name>substrate</name>
    </ligand>
</feature>
<feature type="binding site" evidence="1">
    <location>
        <position position="152"/>
    </location>
    <ligand>
        <name>substrate</name>
    </ligand>
</feature>
<comment type="function">
    <text evidence="1">Catalyzes the reversible oxidation of malate to oxaloacetate.</text>
</comment>
<comment type="catalytic activity">
    <reaction evidence="1">
        <text>(S)-malate + NAD(+) = oxaloacetate + NADH + H(+)</text>
        <dbReference type="Rhea" id="RHEA:21432"/>
        <dbReference type="ChEBI" id="CHEBI:15378"/>
        <dbReference type="ChEBI" id="CHEBI:15589"/>
        <dbReference type="ChEBI" id="CHEBI:16452"/>
        <dbReference type="ChEBI" id="CHEBI:57540"/>
        <dbReference type="ChEBI" id="CHEBI:57945"/>
        <dbReference type="EC" id="1.1.1.37"/>
    </reaction>
</comment>
<comment type="similarity">
    <text evidence="1">Belongs to the LDH/MDH superfamily. MDH type 3 family.</text>
</comment>
<dbReference type="EC" id="1.1.1.37" evidence="1"/>
<dbReference type="EMBL" id="CP000872">
    <property type="protein sequence ID" value="ABX62961.1"/>
    <property type="molecule type" value="Genomic_DNA"/>
</dbReference>
<dbReference type="RefSeq" id="WP_004691094.1">
    <property type="nucleotide sequence ID" value="NC_010103.1"/>
</dbReference>
<dbReference type="SMR" id="A9M8R3"/>
<dbReference type="GeneID" id="55591517"/>
<dbReference type="KEGG" id="bcs:BCAN_A1971"/>
<dbReference type="HOGENOM" id="CLU_045401_2_1_5"/>
<dbReference type="PhylomeDB" id="A9M8R3"/>
<dbReference type="Proteomes" id="UP000001385">
    <property type="component" value="Chromosome I"/>
</dbReference>
<dbReference type="GO" id="GO:0004459">
    <property type="term" value="F:L-lactate dehydrogenase activity"/>
    <property type="evidence" value="ECO:0007669"/>
    <property type="project" value="TreeGrafter"/>
</dbReference>
<dbReference type="GO" id="GO:0030060">
    <property type="term" value="F:L-malate dehydrogenase (NAD+) activity"/>
    <property type="evidence" value="ECO:0007669"/>
    <property type="project" value="UniProtKB-UniRule"/>
</dbReference>
<dbReference type="GO" id="GO:0006089">
    <property type="term" value="P:lactate metabolic process"/>
    <property type="evidence" value="ECO:0007669"/>
    <property type="project" value="TreeGrafter"/>
</dbReference>
<dbReference type="GO" id="GO:0006099">
    <property type="term" value="P:tricarboxylic acid cycle"/>
    <property type="evidence" value="ECO:0007669"/>
    <property type="project" value="UniProtKB-UniRule"/>
</dbReference>
<dbReference type="CDD" id="cd01339">
    <property type="entry name" value="LDH-like_MDH"/>
    <property type="match status" value="1"/>
</dbReference>
<dbReference type="FunFam" id="3.40.50.720:FF:000018">
    <property type="entry name" value="Malate dehydrogenase"/>
    <property type="match status" value="1"/>
</dbReference>
<dbReference type="FunFam" id="3.90.110.10:FF:000004">
    <property type="entry name" value="Malate dehydrogenase"/>
    <property type="match status" value="1"/>
</dbReference>
<dbReference type="Gene3D" id="3.90.110.10">
    <property type="entry name" value="Lactate dehydrogenase/glycoside hydrolase, family 4, C-terminal"/>
    <property type="match status" value="1"/>
</dbReference>
<dbReference type="Gene3D" id="3.40.50.720">
    <property type="entry name" value="NAD(P)-binding Rossmann-like Domain"/>
    <property type="match status" value="1"/>
</dbReference>
<dbReference type="HAMAP" id="MF_00487">
    <property type="entry name" value="Malate_dehydrog_3"/>
    <property type="match status" value="1"/>
</dbReference>
<dbReference type="InterPro" id="IPR001557">
    <property type="entry name" value="L-lactate/malate_DH"/>
</dbReference>
<dbReference type="InterPro" id="IPR022383">
    <property type="entry name" value="Lactate/malate_DH_C"/>
</dbReference>
<dbReference type="InterPro" id="IPR001236">
    <property type="entry name" value="Lactate/malate_DH_N"/>
</dbReference>
<dbReference type="InterPro" id="IPR015955">
    <property type="entry name" value="Lactate_DH/Glyco_Ohase_4_C"/>
</dbReference>
<dbReference type="InterPro" id="IPR011275">
    <property type="entry name" value="Malate_DH_type3"/>
</dbReference>
<dbReference type="InterPro" id="IPR036291">
    <property type="entry name" value="NAD(P)-bd_dom_sf"/>
</dbReference>
<dbReference type="NCBIfam" id="TIGR01763">
    <property type="entry name" value="MalateDH_bact"/>
    <property type="match status" value="1"/>
</dbReference>
<dbReference type="NCBIfam" id="NF004863">
    <property type="entry name" value="PRK06223.1"/>
    <property type="match status" value="1"/>
</dbReference>
<dbReference type="PANTHER" id="PTHR43128">
    <property type="entry name" value="L-2-HYDROXYCARBOXYLATE DEHYDROGENASE (NAD(P)(+))"/>
    <property type="match status" value="1"/>
</dbReference>
<dbReference type="PANTHER" id="PTHR43128:SF16">
    <property type="entry name" value="L-LACTATE DEHYDROGENASE"/>
    <property type="match status" value="1"/>
</dbReference>
<dbReference type="Pfam" id="PF02866">
    <property type="entry name" value="Ldh_1_C"/>
    <property type="match status" value="1"/>
</dbReference>
<dbReference type="Pfam" id="PF00056">
    <property type="entry name" value="Ldh_1_N"/>
    <property type="match status" value="1"/>
</dbReference>
<dbReference type="PIRSF" id="PIRSF000102">
    <property type="entry name" value="Lac_mal_DH"/>
    <property type="match status" value="1"/>
</dbReference>
<dbReference type="PRINTS" id="PR00086">
    <property type="entry name" value="LLDHDRGNASE"/>
</dbReference>
<dbReference type="SUPFAM" id="SSF56327">
    <property type="entry name" value="LDH C-terminal domain-like"/>
    <property type="match status" value="1"/>
</dbReference>
<dbReference type="SUPFAM" id="SSF51735">
    <property type="entry name" value="NAD(P)-binding Rossmann-fold domains"/>
    <property type="match status" value="1"/>
</dbReference>
<keyword id="KW-0520">NAD</keyword>
<keyword id="KW-0560">Oxidoreductase</keyword>
<keyword id="KW-1185">Reference proteome</keyword>
<keyword id="KW-0816">Tricarboxylic acid cycle</keyword>
<sequence length="320" mass="33672">MARNKIALIGSGMIGGTLAHLAGLKELGDVVLFDIAEGTPQGKGLDIAESSPVDGFDAKFTGANDYAAIEGADVVIVTAGVPRKPGMSRDDLLGINLKVMEQVGAGIKKYAPEAFVICITNPLDAMVWALQKFSGLPAHKVVGMAGVLDSARFRYFLSEEFNVSVEDVTAFVLGGHGDSMVPLARYSTVAGIPLPDLVKMGWTSRDKLDKIIQRTRDGGAEIVGLLKTGSAFYAPAASAIQVAESYLKDKKRVLPVAAQLSGQYGVKDMYVGVPTVIGANGVERIIEIDLDKDEKAQFDKSVASVAGLCEACIGIAPSLK</sequence>
<organism>
    <name type="scientific">Brucella canis (strain ATCC 23365 / NCTC 10854 / RM-666)</name>
    <dbReference type="NCBI Taxonomy" id="483179"/>
    <lineage>
        <taxon>Bacteria</taxon>
        <taxon>Pseudomonadati</taxon>
        <taxon>Pseudomonadota</taxon>
        <taxon>Alphaproteobacteria</taxon>
        <taxon>Hyphomicrobiales</taxon>
        <taxon>Brucellaceae</taxon>
        <taxon>Brucella/Ochrobactrum group</taxon>
        <taxon>Brucella</taxon>
    </lineage>
</organism>